<sequence>MVNLRGYNWKSQQLLLFLIIVAAWEAGSGQLHYSVPEEAKHGTFVGRIAQDLGLELTELVPRLFRVASKDRGDLLEVNLQNGILFVNSRIDREELCGRSAECSIHLEVIVDRPLQVFHVEVEVKDINDNPPMFPATQKALFILESRLLDSRFPLEGASDADVGSNALLTYRLSTNEHFSLDVPPNHEQVKPLGLVLRKPLDREEAAEIRLLLTATDGGKPELTGTVQLLITVLDVNDNAPVFDRSLYTVKLPENVPNGTLVIKVNASDLDEGVNGDVMYSFSSDVSSDIKSKFHMDTVSGEITVIGIIDFEESKAYKIPLEARDKGFPQLPGHCTILVEVVDANDNAPQLTVSSLSLPVSEDSQPGRVVTLISVFDRDSGANGQVTCSLTPHIPFKLVSTFKNYYSLVLDSALDRETIANYDVIVTARDGGSPSLWATASVSVEVADVNDNAPLFAQPEYTVFVKENNPPGAHIFTVSAMDADAQENALVSYSLVERRVGERLLSSYVSVHAESGKVFALQPLDHEELELLQFQVSARDAGVPALGSNVTLQVFVLDENDNAPTLLGPLANGVGGTMNEVVSRALVPGQVVAKVRAVDEDSGYNAWLSFELQPVAGGVRSPFRVGLYTGEISTTRALEETDALRQCLLVLVKDHGEPSLTATATVLLSLVDSGQTQKVSSKVSAGASRVDQRLVDVNVYLIIAICAVSSLLVLTLLLYTALRCSATPTDGACAPGKPMLVCSSAVGSWSYSQQRRQRVCSGEGPPKTDLMAFSPSLPQGPSSTDNPRQPNPDWRYSASLRAGMHSSVHLEEAGILRAGPGGPDQQWPTVSSATPEPEAGEVSPPVGAGVNSNSWTFKYGPGNPKQSGPGELPDKFIIPGSPAIISIRQEPANNQIDKSDFITFGKKEETKKKKKKKKGNKTQEKKEKGNSTTDNSDQ</sequence>
<gene>
    <name evidence="7" type="primary">Pcdha7</name>
</gene>
<keyword id="KW-0002">3D-structure</keyword>
<keyword id="KW-0106">Calcium</keyword>
<keyword id="KW-0130">Cell adhesion</keyword>
<keyword id="KW-1003">Cell membrane</keyword>
<keyword id="KW-1015">Disulfide bond</keyword>
<keyword id="KW-0325">Glycoprotein</keyword>
<keyword id="KW-0472">Membrane</keyword>
<keyword id="KW-0479">Metal-binding</keyword>
<keyword id="KW-1185">Reference proteome</keyword>
<keyword id="KW-0677">Repeat</keyword>
<keyword id="KW-0732">Signal</keyword>
<keyword id="KW-0812">Transmembrane</keyword>
<keyword id="KW-1133">Transmembrane helix</keyword>
<accession>Q91Y13</accession>
<protein>
    <recommendedName>
        <fullName evidence="5">Protocadherin alpha-7</fullName>
        <shortName evidence="5">PCDH-alpha-7</shortName>
    </recommendedName>
</protein>
<proteinExistence type="evidence at protein level"/>
<name>PCDA7_MOUSE</name>
<evidence type="ECO:0000255" key="1"/>
<evidence type="ECO:0000255" key="2">
    <source>
        <dbReference type="PROSITE-ProRule" id="PRU00043"/>
    </source>
</evidence>
<evidence type="ECO:0000256" key="3">
    <source>
        <dbReference type="SAM" id="MobiDB-lite"/>
    </source>
</evidence>
<evidence type="ECO:0000269" key="4">
    <source>
    </source>
</evidence>
<evidence type="ECO:0000305" key="5"/>
<evidence type="ECO:0000305" key="6">
    <source>
    </source>
</evidence>
<evidence type="ECO:0000312" key="7">
    <source>
        <dbReference type="MGI" id="MGI:1298369"/>
    </source>
</evidence>
<evidence type="ECO:0000312" key="8">
    <source>
        <dbReference type="PDB" id="5DZV"/>
    </source>
</evidence>
<comment type="function">
    <text evidence="4">Calcium-dependent cell-adhesion protein involved in cells self-recognition and non-self discrimination (PubMed:27161523). Thereby, it is involved in the establishment and maintenance of specific neuronal connections in the brain (PubMed:27161523).</text>
</comment>
<comment type="subunit">
    <text evidence="4">Forms homodimers in trans (molecules expressed by two different cells) (PubMed:27161523). Forms promiscuous heterodimers in cis (at the plasma membrane of the same cell) with other protocadherins (PubMed:27161523).</text>
</comment>
<comment type="subcellular location">
    <subcellularLocation>
        <location evidence="4">Cell membrane</location>
        <topology evidence="4">Single-pass type I membrane protein</topology>
    </subcellularLocation>
</comment>
<comment type="domain">
    <text evidence="4 8">Cadherin 1 to cadherin 4 domains mediate homophilic trans-interaction, the interaction with an identical protocadherin expressed by a neighboring cell (PubMed:27161523). This is a head-to-tail interaction, the cadherin 1 domain interacting with the cadherin 4 domain and the cadherin 2 domain interacting the cadherin 3 domain of the other protocadherin (PubMed:27161523). The cadherin 6 domain mediates promiscuous interactions with protocadherins on the same cell membrane. Each cadherin domain binds three calcium ions (PubMed:27161523).</text>
</comment>
<organism>
    <name type="scientific">Mus musculus</name>
    <name type="common">Mouse</name>
    <dbReference type="NCBI Taxonomy" id="10090"/>
    <lineage>
        <taxon>Eukaryota</taxon>
        <taxon>Metazoa</taxon>
        <taxon>Chordata</taxon>
        <taxon>Craniata</taxon>
        <taxon>Vertebrata</taxon>
        <taxon>Euteleostomi</taxon>
        <taxon>Mammalia</taxon>
        <taxon>Eutheria</taxon>
        <taxon>Euarchontoglires</taxon>
        <taxon>Glires</taxon>
        <taxon>Rodentia</taxon>
        <taxon>Myomorpha</taxon>
        <taxon>Muroidea</taxon>
        <taxon>Muridae</taxon>
        <taxon>Murinae</taxon>
        <taxon>Mus</taxon>
        <taxon>Mus</taxon>
    </lineage>
</organism>
<dbReference type="EMBL" id="AY013765">
    <property type="protein sequence ID" value="AAK26054.1"/>
    <property type="molecule type" value="mRNA"/>
</dbReference>
<dbReference type="EMBL" id="AC020968">
    <property type="status" value="NOT_ANNOTATED_CDS"/>
    <property type="molecule type" value="Genomic_DNA"/>
</dbReference>
<dbReference type="EMBL" id="AC020972">
    <property type="status" value="NOT_ANNOTATED_CDS"/>
    <property type="molecule type" value="Genomic_DNA"/>
</dbReference>
<dbReference type="EMBL" id="AC020973">
    <property type="status" value="NOT_ANNOTATED_CDS"/>
    <property type="molecule type" value="Genomic_DNA"/>
</dbReference>
<dbReference type="RefSeq" id="NP_034087.1">
    <property type="nucleotide sequence ID" value="NM_009957.1"/>
</dbReference>
<dbReference type="PDB" id="5DZV">
    <property type="method" value="X-ray"/>
    <property type="resolution" value="3.60 A"/>
    <property type="chains" value="A/B=30-560"/>
</dbReference>
<dbReference type="PDBsum" id="5DZV"/>
<dbReference type="SMR" id="Q91Y13"/>
<dbReference type="CORUM" id="Q91Y13"/>
<dbReference type="FunCoup" id="Q91Y13">
    <property type="interactions" value="835"/>
</dbReference>
<dbReference type="STRING" id="10090.ENSMUSP00000142156"/>
<dbReference type="GlyCosmos" id="Q91Y13">
    <property type="glycosylation" value="7 sites, No reported glycans"/>
</dbReference>
<dbReference type="GlyGen" id="Q91Y13">
    <property type="glycosylation" value="7 sites, 1 N-linked glycan (1 site)"/>
</dbReference>
<dbReference type="iPTMnet" id="Q91Y13"/>
<dbReference type="PhosphoSitePlus" id="Q91Y13"/>
<dbReference type="ProteomicsDB" id="289321"/>
<dbReference type="DNASU" id="12939"/>
<dbReference type="Ensembl" id="ENSMUST00000192631.2">
    <property type="protein sequence ID" value="ENSMUSP00000142156.2"/>
    <property type="gene ID" value="ENSMUSG00000104318.2"/>
</dbReference>
<dbReference type="GeneID" id="12939"/>
<dbReference type="KEGG" id="mmu:12939"/>
<dbReference type="UCSC" id="uc008epc.3">
    <property type="organism name" value="mouse"/>
</dbReference>
<dbReference type="AGR" id="MGI:1298369"/>
<dbReference type="CTD" id="56141"/>
<dbReference type="MGI" id="MGI:1298369">
    <property type="gene designation" value="Pcdha7"/>
</dbReference>
<dbReference type="VEuPathDB" id="HostDB:ENSMUSG00000104318"/>
<dbReference type="GeneTree" id="ENSGT00940000163312"/>
<dbReference type="HOGENOM" id="CLU_006480_0_0_1"/>
<dbReference type="InParanoid" id="Q91Y13"/>
<dbReference type="OMA" id="SEMRMPG"/>
<dbReference type="BioGRID-ORCS" id="12939">
    <property type="hits" value="2 hits in 66 CRISPR screens"/>
</dbReference>
<dbReference type="EvolutionaryTrace" id="Q91Y13"/>
<dbReference type="PRO" id="PR:Q91Y13"/>
<dbReference type="Proteomes" id="UP000000589">
    <property type="component" value="Chromosome 18"/>
</dbReference>
<dbReference type="RNAct" id="Q91Y13">
    <property type="molecule type" value="protein"/>
</dbReference>
<dbReference type="Bgee" id="ENSMUSG00000104318">
    <property type="expression patterns" value="Expressed in mesodermal cell in embryo and 52 other cell types or tissues"/>
</dbReference>
<dbReference type="GO" id="GO:0016020">
    <property type="term" value="C:membrane"/>
    <property type="evidence" value="ECO:0000314"/>
    <property type="project" value="MGI"/>
</dbReference>
<dbReference type="GO" id="GO:0005886">
    <property type="term" value="C:plasma membrane"/>
    <property type="evidence" value="ECO:0000314"/>
    <property type="project" value="UniProtKB"/>
</dbReference>
<dbReference type="GO" id="GO:0005509">
    <property type="term" value="F:calcium ion binding"/>
    <property type="evidence" value="ECO:0000314"/>
    <property type="project" value="UniProtKB"/>
</dbReference>
<dbReference type="GO" id="GO:0042802">
    <property type="term" value="F:identical protein binding"/>
    <property type="evidence" value="ECO:0000314"/>
    <property type="project" value="UniProtKB"/>
</dbReference>
<dbReference type="GO" id="GO:0009988">
    <property type="term" value="P:cell-cell recognition"/>
    <property type="evidence" value="ECO:0000314"/>
    <property type="project" value="UniProtKB"/>
</dbReference>
<dbReference type="GO" id="GO:0007156">
    <property type="term" value="P:homophilic cell adhesion via plasma membrane adhesion molecules"/>
    <property type="evidence" value="ECO:0000314"/>
    <property type="project" value="UniProtKB"/>
</dbReference>
<dbReference type="CDD" id="cd11304">
    <property type="entry name" value="Cadherin_repeat"/>
    <property type="match status" value="6"/>
</dbReference>
<dbReference type="FunFam" id="2.60.40.60:FF:000004">
    <property type="entry name" value="Protocadherin 1 gamma 2"/>
    <property type="match status" value="1"/>
</dbReference>
<dbReference type="FunFam" id="2.60.40.60:FF:000001">
    <property type="entry name" value="Protocadherin alpha 2"/>
    <property type="match status" value="1"/>
</dbReference>
<dbReference type="FunFam" id="2.60.40.60:FF:000002">
    <property type="entry name" value="Protocadherin alpha 2"/>
    <property type="match status" value="1"/>
</dbReference>
<dbReference type="FunFam" id="2.60.40.60:FF:000003">
    <property type="entry name" value="Protocadherin alpha 2"/>
    <property type="match status" value="1"/>
</dbReference>
<dbReference type="FunFam" id="2.60.40.60:FF:000006">
    <property type="entry name" value="Protocadherin alpha 2"/>
    <property type="match status" value="1"/>
</dbReference>
<dbReference type="FunFam" id="2.60.40.60:FF:000007">
    <property type="entry name" value="Protocadherin alpha 2"/>
    <property type="match status" value="1"/>
</dbReference>
<dbReference type="Gene3D" id="2.60.40.60">
    <property type="entry name" value="Cadherins"/>
    <property type="match status" value="6"/>
</dbReference>
<dbReference type="InterPro" id="IPR002126">
    <property type="entry name" value="Cadherin-like_dom"/>
</dbReference>
<dbReference type="InterPro" id="IPR015919">
    <property type="entry name" value="Cadherin-like_sf"/>
</dbReference>
<dbReference type="InterPro" id="IPR031904">
    <property type="entry name" value="Cadherin_CBD"/>
</dbReference>
<dbReference type="InterPro" id="IPR020894">
    <property type="entry name" value="Cadherin_CS"/>
</dbReference>
<dbReference type="InterPro" id="IPR013164">
    <property type="entry name" value="Cadherin_N"/>
</dbReference>
<dbReference type="InterPro" id="IPR050174">
    <property type="entry name" value="Protocadherin/Cadherin-CA"/>
</dbReference>
<dbReference type="PANTHER" id="PTHR24028">
    <property type="entry name" value="CADHERIN-87A"/>
    <property type="match status" value="1"/>
</dbReference>
<dbReference type="PANTHER" id="PTHR24028:SF255">
    <property type="entry name" value="PROTOCADHERIN ALPHA-9"/>
    <property type="match status" value="1"/>
</dbReference>
<dbReference type="Pfam" id="PF00028">
    <property type="entry name" value="Cadherin"/>
    <property type="match status" value="5"/>
</dbReference>
<dbReference type="Pfam" id="PF08266">
    <property type="entry name" value="Cadherin_2"/>
    <property type="match status" value="1"/>
</dbReference>
<dbReference type="Pfam" id="PF15974">
    <property type="entry name" value="Cadherin_tail"/>
    <property type="match status" value="1"/>
</dbReference>
<dbReference type="PRINTS" id="PR00205">
    <property type="entry name" value="CADHERIN"/>
</dbReference>
<dbReference type="SMART" id="SM00112">
    <property type="entry name" value="CA"/>
    <property type="match status" value="6"/>
</dbReference>
<dbReference type="SUPFAM" id="SSF49313">
    <property type="entry name" value="Cadherin-like"/>
    <property type="match status" value="6"/>
</dbReference>
<dbReference type="PROSITE" id="PS00232">
    <property type="entry name" value="CADHERIN_1"/>
    <property type="match status" value="5"/>
</dbReference>
<dbReference type="PROSITE" id="PS50268">
    <property type="entry name" value="CADHERIN_2"/>
    <property type="match status" value="6"/>
</dbReference>
<feature type="signal peptide" evidence="1">
    <location>
        <begin position="1"/>
        <end position="29"/>
    </location>
</feature>
<feature type="chain" id="PRO_5008429382" description="Protocadherin alpha-7" evidence="1">
    <location>
        <begin position="30"/>
        <end position="937"/>
    </location>
</feature>
<feature type="topological domain" description="Extracellular" evidence="6">
    <location>
        <begin position="30"/>
        <end position="697"/>
    </location>
</feature>
<feature type="transmembrane region" description="Helical" evidence="1">
    <location>
        <begin position="698"/>
        <end position="718"/>
    </location>
</feature>
<feature type="topological domain" description="Cytoplasmic" evidence="6">
    <location>
        <begin position="719"/>
        <end position="937"/>
    </location>
</feature>
<feature type="domain" description="Cadherin 1" evidence="2">
    <location>
        <begin position="34"/>
        <end position="133"/>
    </location>
</feature>
<feature type="domain" description="Cadherin 2" evidence="2">
    <location>
        <begin position="157"/>
        <end position="242"/>
    </location>
</feature>
<feature type="domain" description="Cadherin 3" evidence="2">
    <location>
        <begin position="243"/>
        <end position="350"/>
    </location>
</feature>
<feature type="domain" description="Cadherin 4" evidence="2">
    <location>
        <begin position="351"/>
        <end position="455"/>
    </location>
</feature>
<feature type="domain" description="Cadherin 5" evidence="2">
    <location>
        <begin position="456"/>
        <end position="565"/>
    </location>
</feature>
<feature type="domain" description="Cadherin 6" evidence="2">
    <location>
        <begin position="587"/>
        <end position="682"/>
    </location>
</feature>
<feature type="repeat" description="PXXP 1">
    <location>
        <begin position="774"/>
        <end position="777"/>
    </location>
</feature>
<feature type="repeat" description="PXXP 2">
    <location>
        <begin position="786"/>
        <end position="789"/>
    </location>
</feature>
<feature type="repeat" description="PXXP 3">
    <location>
        <begin position="819"/>
        <end position="822"/>
    </location>
</feature>
<feature type="repeat" description="PXXP 4">
    <location>
        <begin position="860"/>
        <end position="863"/>
    </location>
</feature>
<feature type="repeat" description="PXXP 5">
    <location>
        <begin position="878"/>
        <end position="881"/>
    </location>
</feature>
<feature type="region of interest" description="Disordered" evidence="3">
    <location>
        <begin position="755"/>
        <end position="794"/>
    </location>
</feature>
<feature type="region of interest" description="5 X 4 AA repeats of P-X-X-P">
    <location>
        <begin position="774"/>
        <end position="881"/>
    </location>
</feature>
<feature type="region of interest" description="Disordered" evidence="3">
    <location>
        <begin position="816"/>
        <end position="843"/>
    </location>
</feature>
<feature type="region of interest" description="Disordered" evidence="3">
    <location>
        <begin position="887"/>
        <end position="937"/>
    </location>
</feature>
<feature type="compositionally biased region" description="Polar residues" evidence="3">
    <location>
        <begin position="775"/>
        <end position="787"/>
    </location>
</feature>
<feature type="compositionally biased region" description="Basic and acidic residues" evidence="3">
    <location>
        <begin position="896"/>
        <end position="910"/>
    </location>
</feature>
<feature type="glycosylation site" description="O-linked (Man) threonine" evidence="4 8">
    <location>
        <position position="223"/>
    </location>
</feature>
<feature type="glycosylation site" description="O-linked (Man) threonine" evidence="4 8">
    <location>
        <position position="225"/>
    </location>
</feature>
<feature type="glycosylation site" description="N-linked (GlcNAc...) asparagine" evidence="4 8">
    <location>
        <position position="257"/>
    </location>
</feature>
<feature type="glycosylation site" description="N-linked (GlcNAc...) asparagine" evidence="4 8">
    <location>
        <position position="265"/>
    </location>
</feature>
<feature type="glycosylation site" description="O-linked (Man) threonine" evidence="4 8">
    <location>
        <position position="438"/>
    </location>
</feature>
<feature type="glycosylation site" description="O-linked (Man) serine" evidence="4 8">
    <location>
        <position position="478"/>
    </location>
</feature>
<feature type="glycosylation site" description="N-linked (GlcNAc...) asparagine" evidence="4 8">
    <location>
        <position position="548"/>
    </location>
</feature>
<feature type="disulfide bond" evidence="4 8">
    <location>
        <begin position="96"/>
        <end position="102"/>
    </location>
</feature>
<feature type="mutagenesis site" description="Changed homophilic interaction, being unable to interact with the wild-type protein but able to bind itself; when associated with L-284." evidence="4">
    <original>K</original>
    <variation>Q</variation>
    <location>
        <position position="138"/>
    </location>
</feature>
<feature type="mutagenesis site" description="No effect on homophilic interaction. Changed homophilic interaction, being unable to interact with the wild-type protein but able to bind itself; when associated with Q-138." evidence="4">
    <original>D</original>
    <variation>L</variation>
    <location>
        <position position="284"/>
    </location>
</feature>
<feature type="mutagenesis site" description="Changed homophilic interaction, being unable to interact with the wild-type protein but able to bind itself." evidence="4">
    <original>P</original>
    <variation>F</variation>
    <location>
        <position position="328"/>
    </location>
</feature>
<reference key="1">
    <citation type="journal article" date="2001" name="Genome Res.">
        <title>Comparative DNA sequence analysis of mouse and human protocadherin gene clusters.</title>
        <authorList>
            <person name="Wu Q."/>
            <person name="Zhang T."/>
            <person name="Cheng J.-F."/>
            <person name="Kim Y."/>
            <person name="Grimwood J."/>
            <person name="Schmutz J."/>
            <person name="Dickson M."/>
            <person name="Noonan J.P."/>
            <person name="Zhang M.Q."/>
            <person name="Myers R.M."/>
            <person name="Maniatis T."/>
        </authorList>
    </citation>
    <scope>NUCLEOTIDE SEQUENCE [MRNA]</scope>
    <source>
        <tissue>Brain</tissue>
    </source>
</reference>
<reference key="2">
    <citation type="journal article" date="2009" name="PLoS Biol.">
        <title>Lineage-specific biology revealed by a finished genome assembly of the mouse.</title>
        <authorList>
            <person name="Church D.M."/>
            <person name="Goodstadt L."/>
            <person name="Hillier L.W."/>
            <person name="Zody M.C."/>
            <person name="Goldstein S."/>
            <person name="She X."/>
            <person name="Bult C.J."/>
            <person name="Agarwala R."/>
            <person name="Cherry J.L."/>
            <person name="DiCuccio M."/>
            <person name="Hlavina W."/>
            <person name="Kapustin Y."/>
            <person name="Meric P."/>
            <person name="Maglott D."/>
            <person name="Birtle Z."/>
            <person name="Marques A.C."/>
            <person name="Graves T."/>
            <person name="Zhou S."/>
            <person name="Teague B."/>
            <person name="Potamousis K."/>
            <person name="Churas C."/>
            <person name="Place M."/>
            <person name="Herschleb J."/>
            <person name="Runnheim R."/>
            <person name="Forrest D."/>
            <person name="Amos-Landgraf J."/>
            <person name="Schwartz D.C."/>
            <person name="Cheng Z."/>
            <person name="Lindblad-Toh K."/>
            <person name="Eichler E.E."/>
            <person name="Ponting C.P."/>
        </authorList>
    </citation>
    <scope>NUCLEOTIDE SEQUENCE [LARGE SCALE GENOMIC DNA]</scope>
    <source>
        <strain>C57BL/6J</strain>
    </source>
</reference>
<reference key="3">
    <citation type="journal article" date="2016" name="Neuron">
        <title>Structural basis of diverse homophilic recognition by clustered alpha- and beta-protocadherins.</title>
        <authorList>
            <person name="Goodman K.M."/>
            <person name="Rubinstein R."/>
            <person name="Thu C.A."/>
            <person name="Bahna F."/>
            <person name="Mannepalli S."/>
            <person name="Ahlsen G."/>
            <person name="Rittenhouse C."/>
            <person name="Maniatis T."/>
            <person name="Honig B."/>
            <person name="Shapiro L."/>
        </authorList>
    </citation>
    <scope>X-RAY CRYSTALLOGRAPHY (3.60 ANGSTROMS) OF 30-560 OF HOMODIMER IN COMPLEX WITH CALCIUM</scope>
    <scope>FUNCTION</scope>
    <scope>SUBUNIT</scope>
    <scope>SUBCELLULAR LOCATION</scope>
    <scope>TOPOLOGY</scope>
    <scope>DOMAIN</scope>
    <scope>DISULFIDE BONDS</scope>
    <scope>GLYCOSYLATION AT THR-223; THR-225; ASN-257; ASN-265; THR-438; SER-478 AND ASN-548</scope>
    <scope>MUTAGENESIS OF LYS-138; ASP-284 AND PRO-328</scope>
</reference>